<feature type="chain" id="PRO_1000009991" description="DNA mismatch repair protein MutL">
    <location>
        <begin position="1"/>
        <end position="611"/>
    </location>
</feature>
<gene>
    <name evidence="1" type="primary">mutL</name>
    <name type="ordered locus">BG0213</name>
</gene>
<dbReference type="EMBL" id="CP000013">
    <property type="protein sequence ID" value="AAU07068.1"/>
    <property type="molecule type" value="Genomic_DNA"/>
</dbReference>
<dbReference type="RefSeq" id="WP_011193556.1">
    <property type="nucleotide sequence ID" value="NC_006156.1"/>
</dbReference>
<dbReference type="SMR" id="Q662F3"/>
<dbReference type="GeneID" id="45161005"/>
<dbReference type="KEGG" id="bga:BG0213"/>
<dbReference type="eggNOG" id="COG0323">
    <property type="taxonomic scope" value="Bacteria"/>
</dbReference>
<dbReference type="HOGENOM" id="CLU_004131_4_1_12"/>
<dbReference type="OrthoDB" id="9763467at2"/>
<dbReference type="Proteomes" id="UP000002276">
    <property type="component" value="Chromosome"/>
</dbReference>
<dbReference type="GO" id="GO:0032300">
    <property type="term" value="C:mismatch repair complex"/>
    <property type="evidence" value="ECO:0007669"/>
    <property type="project" value="InterPro"/>
</dbReference>
<dbReference type="GO" id="GO:0005524">
    <property type="term" value="F:ATP binding"/>
    <property type="evidence" value="ECO:0007669"/>
    <property type="project" value="InterPro"/>
</dbReference>
<dbReference type="GO" id="GO:0016887">
    <property type="term" value="F:ATP hydrolysis activity"/>
    <property type="evidence" value="ECO:0007669"/>
    <property type="project" value="InterPro"/>
</dbReference>
<dbReference type="GO" id="GO:0140664">
    <property type="term" value="F:ATP-dependent DNA damage sensor activity"/>
    <property type="evidence" value="ECO:0007669"/>
    <property type="project" value="InterPro"/>
</dbReference>
<dbReference type="GO" id="GO:0030983">
    <property type="term" value="F:mismatched DNA binding"/>
    <property type="evidence" value="ECO:0007669"/>
    <property type="project" value="InterPro"/>
</dbReference>
<dbReference type="GO" id="GO:0006298">
    <property type="term" value="P:mismatch repair"/>
    <property type="evidence" value="ECO:0007669"/>
    <property type="project" value="UniProtKB-UniRule"/>
</dbReference>
<dbReference type="CDD" id="cd16926">
    <property type="entry name" value="HATPase_MutL-MLH-PMS-like"/>
    <property type="match status" value="1"/>
</dbReference>
<dbReference type="CDD" id="cd00782">
    <property type="entry name" value="MutL_Trans"/>
    <property type="match status" value="1"/>
</dbReference>
<dbReference type="FunFam" id="3.30.565.10:FF:000003">
    <property type="entry name" value="DNA mismatch repair endonuclease MutL"/>
    <property type="match status" value="1"/>
</dbReference>
<dbReference type="Gene3D" id="3.30.230.10">
    <property type="match status" value="1"/>
</dbReference>
<dbReference type="Gene3D" id="3.30.565.10">
    <property type="entry name" value="Histidine kinase-like ATPase, C-terminal domain"/>
    <property type="match status" value="1"/>
</dbReference>
<dbReference type="Gene3D" id="3.30.1540.20">
    <property type="entry name" value="MutL, C-terminal domain, dimerisation subdomain"/>
    <property type="match status" value="1"/>
</dbReference>
<dbReference type="Gene3D" id="3.30.1370.100">
    <property type="entry name" value="MutL, C-terminal domain, regulatory subdomain"/>
    <property type="match status" value="1"/>
</dbReference>
<dbReference type="HAMAP" id="MF_00149">
    <property type="entry name" value="DNA_mis_repair"/>
    <property type="match status" value="1"/>
</dbReference>
<dbReference type="InterPro" id="IPR014762">
    <property type="entry name" value="DNA_mismatch_repair_CS"/>
</dbReference>
<dbReference type="InterPro" id="IPR020667">
    <property type="entry name" value="DNA_mismatch_repair_MutL"/>
</dbReference>
<dbReference type="InterPro" id="IPR013507">
    <property type="entry name" value="DNA_mismatch_S5_2-like"/>
</dbReference>
<dbReference type="InterPro" id="IPR036890">
    <property type="entry name" value="HATPase_C_sf"/>
</dbReference>
<dbReference type="InterPro" id="IPR002099">
    <property type="entry name" value="MutL/Mlh/PMS"/>
</dbReference>
<dbReference type="InterPro" id="IPR038973">
    <property type="entry name" value="MutL/Mlh/Pms-like"/>
</dbReference>
<dbReference type="InterPro" id="IPR014790">
    <property type="entry name" value="MutL_C"/>
</dbReference>
<dbReference type="InterPro" id="IPR042120">
    <property type="entry name" value="MutL_C_dimsub"/>
</dbReference>
<dbReference type="InterPro" id="IPR042121">
    <property type="entry name" value="MutL_C_regsub"/>
</dbReference>
<dbReference type="InterPro" id="IPR037198">
    <property type="entry name" value="MutL_C_sf"/>
</dbReference>
<dbReference type="InterPro" id="IPR020568">
    <property type="entry name" value="Ribosomal_Su5_D2-typ_SF"/>
</dbReference>
<dbReference type="InterPro" id="IPR014721">
    <property type="entry name" value="Ribsml_uS5_D2-typ_fold_subgr"/>
</dbReference>
<dbReference type="NCBIfam" id="TIGR00585">
    <property type="entry name" value="mutl"/>
    <property type="match status" value="1"/>
</dbReference>
<dbReference type="PANTHER" id="PTHR10073">
    <property type="entry name" value="DNA MISMATCH REPAIR PROTEIN MLH, PMS, MUTL"/>
    <property type="match status" value="1"/>
</dbReference>
<dbReference type="PANTHER" id="PTHR10073:SF12">
    <property type="entry name" value="DNA MISMATCH REPAIR PROTEIN MLH1"/>
    <property type="match status" value="1"/>
</dbReference>
<dbReference type="Pfam" id="PF01119">
    <property type="entry name" value="DNA_mis_repair"/>
    <property type="match status" value="1"/>
</dbReference>
<dbReference type="Pfam" id="PF13589">
    <property type="entry name" value="HATPase_c_3"/>
    <property type="match status" value="1"/>
</dbReference>
<dbReference type="Pfam" id="PF08676">
    <property type="entry name" value="MutL_C"/>
    <property type="match status" value="1"/>
</dbReference>
<dbReference type="SMART" id="SM01340">
    <property type="entry name" value="DNA_mis_repair"/>
    <property type="match status" value="1"/>
</dbReference>
<dbReference type="SMART" id="SM00853">
    <property type="entry name" value="MutL_C"/>
    <property type="match status" value="1"/>
</dbReference>
<dbReference type="SUPFAM" id="SSF55874">
    <property type="entry name" value="ATPase domain of HSP90 chaperone/DNA topoisomerase II/histidine kinase"/>
    <property type="match status" value="1"/>
</dbReference>
<dbReference type="SUPFAM" id="SSF118116">
    <property type="entry name" value="DNA mismatch repair protein MutL"/>
    <property type="match status" value="1"/>
</dbReference>
<dbReference type="SUPFAM" id="SSF54211">
    <property type="entry name" value="Ribosomal protein S5 domain 2-like"/>
    <property type="match status" value="1"/>
</dbReference>
<dbReference type="PROSITE" id="PS00058">
    <property type="entry name" value="DNA_MISMATCH_REPAIR_1"/>
    <property type="match status" value="1"/>
</dbReference>
<keyword id="KW-0227">DNA damage</keyword>
<keyword id="KW-0234">DNA repair</keyword>
<organism>
    <name type="scientific">Borrelia garinii subsp. bavariensis (strain ATCC BAA-2496 / DSM 23469 / PBi)</name>
    <name type="common">Borreliella bavariensis</name>
    <dbReference type="NCBI Taxonomy" id="290434"/>
    <lineage>
        <taxon>Bacteria</taxon>
        <taxon>Pseudomonadati</taxon>
        <taxon>Spirochaetota</taxon>
        <taxon>Spirochaetia</taxon>
        <taxon>Spirochaetales</taxon>
        <taxon>Borreliaceae</taxon>
        <taxon>Borreliella</taxon>
    </lineage>
</organism>
<reference key="1">
    <citation type="journal article" date="2004" name="Nucleic Acids Res.">
        <title>Comparative analysis of the Borrelia garinii genome.</title>
        <authorList>
            <person name="Gloeckner G."/>
            <person name="Lehmann R."/>
            <person name="Romualdi A."/>
            <person name="Pradella S."/>
            <person name="Schulte-Spechtel U."/>
            <person name="Schilhabel M."/>
            <person name="Wilske B."/>
            <person name="Suehnel J."/>
            <person name="Platzer M."/>
        </authorList>
    </citation>
    <scope>NUCLEOTIDE SEQUENCE [LARGE SCALE GENOMIC DNA]</scope>
    <source>
        <strain>ATCC BAA-2496 / DSM 23469 / PBi</strain>
    </source>
</reference>
<protein>
    <recommendedName>
        <fullName evidence="1">DNA mismatch repair protein MutL</fullName>
    </recommendedName>
</protein>
<proteinExistence type="inferred from homology"/>
<accession>Q662F3</accession>
<sequence length="611" mass="71442">MNKIRFLDKYLVQKIAAGESIDRPCSILRELLDNSIDSGATKIEVFLEEGGIHKILIIDNGIGIGKEDLKICYLPHTTSKISSEEDLRKIETLGFRGEALSSIAICSNISITSSTTGNESYQIEVENGIEKCFKKQPAINGTIVNVTKIFHNFPARKRFLKQEPIETKMCLKVLEEKIITHPEINFEINLNQKLRKIYFKESLIDRVQNVYGNVIENNKFKVLKKEHENIKIELFLAPANFSKKSKRHIKTFVNRRPIDQKDLLEAITNGHSRIISPGNFPICYLFLEINPEYIDFNVHPQKKEVRFFNLPFLFKLISDNINNFFDKDINSYNEIVIKRQLTDDDNLIEMINQPKNLNKTNTYDIIQNKNLETEHTVNDLSKNIIQNDIGLRRYNSIIQNRPSFKENITNIFSDKFLEFEEPPNKNEKEEIKFNYIGQIFSEFLIVEKVNEIYFIDQHAVHEKIIYEKLRNSKKTVQKLLIPIEFTIVDKNIEEIIDSEIEEYKKMDIIISKIGPKKYQLESIPNICNQYENTLINFFQSRKSRTINSLESDLYANIACRKAVKTNDILSLEFSKFLIDEFFKLEIKHCPHGRKIYYKISKFELEKKVARA</sequence>
<evidence type="ECO:0000255" key="1">
    <source>
        <dbReference type="HAMAP-Rule" id="MF_00149"/>
    </source>
</evidence>
<comment type="function">
    <text evidence="1">This protein is involved in the repair of mismatches in DNA. It is required for dam-dependent methyl-directed DNA mismatch repair. May act as a 'molecular matchmaker', a protein that promotes the formation of a stable complex between two or more DNA-binding proteins in an ATP-dependent manner without itself being part of a final effector complex.</text>
</comment>
<comment type="similarity">
    <text evidence="1">Belongs to the DNA mismatch repair MutL/HexB family.</text>
</comment>
<name>MUTL_BORGP</name>